<evidence type="ECO:0000250" key="1"/>
<evidence type="ECO:0000255" key="2">
    <source>
        <dbReference type="PROSITE-ProRule" id="PRU00042"/>
    </source>
</evidence>
<evidence type="ECO:0000256" key="3">
    <source>
        <dbReference type="SAM" id="MobiDB-lite"/>
    </source>
</evidence>
<evidence type="ECO:0000269" key="4">
    <source>
    </source>
</evidence>
<evidence type="ECO:0000269" key="5">
    <source>
    </source>
</evidence>
<evidence type="ECO:0000305" key="6"/>
<comment type="function">
    <text evidence="1">Transcription factor that binds specifically to the RAS-responsive elements (RRE) of gene promoters.</text>
</comment>
<comment type="subcellular location">
    <subcellularLocation>
        <location evidence="1">Nucleus</location>
    </subcellularLocation>
</comment>
<comment type="tissue specificity">
    <text evidence="5">Broadly expressed, except in brain.</text>
</comment>
<comment type="similarity">
    <text evidence="6">Belongs to the krueppel C2H2-type zinc-finger protein family.</text>
</comment>
<keyword id="KW-0238">DNA-binding</keyword>
<keyword id="KW-0479">Metal-binding</keyword>
<keyword id="KW-0539">Nucleus</keyword>
<keyword id="KW-1185">Reference proteome</keyword>
<keyword id="KW-0677">Repeat</keyword>
<keyword id="KW-0804">Transcription</keyword>
<keyword id="KW-0805">Transcription regulation</keyword>
<keyword id="KW-0862">Zinc</keyword>
<keyword id="KW-0863">Zinc-finger</keyword>
<organism>
    <name type="scientific">Gallus gallus</name>
    <name type="common">Chicken</name>
    <dbReference type="NCBI Taxonomy" id="9031"/>
    <lineage>
        <taxon>Eukaryota</taxon>
        <taxon>Metazoa</taxon>
        <taxon>Chordata</taxon>
        <taxon>Craniata</taxon>
        <taxon>Vertebrata</taxon>
        <taxon>Euteleostomi</taxon>
        <taxon>Archelosauria</taxon>
        <taxon>Archosauria</taxon>
        <taxon>Dinosauria</taxon>
        <taxon>Saurischia</taxon>
        <taxon>Theropoda</taxon>
        <taxon>Coelurosauria</taxon>
        <taxon>Aves</taxon>
        <taxon>Neognathae</taxon>
        <taxon>Galloanserae</taxon>
        <taxon>Galliformes</taxon>
        <taxon>Phasianidae</taxon>
        <taxon>Phasianinae</taxon>
        <taxon>Gallus</taxon>
    </lineage>
</organism>
<accession>O57415</accession>
<accession>Q9I861</accession>
<proteinExistence type="evidence at transcript level"/>
<name>RREB1_CHICK</name>
<gene>
    <name type="primary">RREB1</name>
</gene>
<protein>
    <recommendedName>
        <fullName>Ras-responsive element-binding protein 1</fullName>
        <shortName>RREB-1</shortName>
    </recommendedName>
</protein>
<sequence length="1615" mass="178389">MMSAVMNVGKIAENGGTSQTVKSPSKSPAPNRIGRRNQETKEEKSSYTCPLCEKICTTQHQLTMHIRQHNTDTGGTDHSCSICGKSLSSASSLDRHMLVHSGERPYKCSVCGQSFTTNGNMHRHMKIHEKDPNSTASTTPPSPLKAKRLSSKRKFSQDAEMDREERTPAKKVVEDGQYGEGDRKEDDAYHCPVCFKDFFCKYALESHMETHPDNSLRCDICCITFRTHRGLLRHNAVIHKQLPRDPTGKPFIQNNPSIPAGFHDLGFTDFSCRKFPRISQVWCETNLRRCISEFHRFICETCNKAFPMLLALKLHTETHVMDQGRDKHKLQSTSLPSENPDQKAFMASLGLQYTKDIKPVKQEDDTQDEVQEMRLRALKSNLPQEPGSTGLLSLSPLEAATMGGPFSVLPPTKENIKLLSLQPFQKGFIIQPDSSIVVKPISNESAIELADIQQILKMASSAPPQISLPPLSKAPSVPVQSIFKHMPPLKPKPLVTPRTVVATSTPPPLISAQQASPGCISPSLPPPPLRLIKNSVETSSNSHLSQPGAKSSPSSQLLLQPKVEPLTQHEMKTQLEQDSIIEALLPLNMEAKIKQEVTEGDLKAIIAGAANKKAPTMRKVLYPCRFCDQVFAFSGVLRAHIRSHLGISPYQCNICDYIAADKAALIRHLRTHSGERPYICKICHYPGTVKANCERHLRKKHLKVTRKDIEKNIEYVTSNAAEMVDAFCSPDTVCKLCGEDLKHYRALRIHMRTHSGCQKKKPFECKECGTAFSAKRNCIHHILKQHLHVQEREIENYILVVDCSAQESHTDAPLLEDSTYMDCKPITPFLEPQNGFLLGTSSHVPIKLEPMGNFPMDFDEPLDFSQKSKNLSAVQVKQENLLVSSPLSFYDCSMEPIDLSIPKVLKRDNDIPGEARNQELASSVITDNAYNWQQCPLGFGANGNSEKNRAVGHPQPLKGSLHLTVPIISPALLGNSALLRPLRPKPPPQPLLPKPPVTKELPPLASIAQIISSVSSAPALLKTEAADASPKAASSSTGCDKSGNAKAKMTIVTAIQRDSNLPSDLTQACDPEPSPIADTGLTKKRGRKKGTKNKPKLSSGVDLESSGEFASIEKMLATTDTNKFSPFLQSTDNFKEESGQNGTSEDEKETPEDKLLRGKRNTYSDCPQKITCPYCPRVFSWASSLQRHMLTHTDSQADTEAPATGGEVLDLTSCEKEQPEEVSELPGSECSPQEEQKADSPPAEEDAEEKADEYEEGPEEDSVSNKSLDLNFASKLMDFKLAESDQSAGSSSQTERKHACDVCGKTFKFAGALSRHKKAHIREDRKDERSSEDESKSIQDDAGAPSMQDSGLEQEESPMDLKVVESPLDCEATGKENEESESISEGEGTERKSTEKSSDDKIPKTDEAKSTAKADKRKKVCTVCNKRFWSLQDLTRHMRSHTGERPYKCQTCERTFTLKHSLVRHQRIHQKVKNTRNHGKESDKEETQSRCGEDSENESSHSGTNPISENECDFAGVVGSHPSGTRSRKESLVGAAKDVPCEEERPSGQGATADLVEPAKSTQKQPAKDQEPRGSSELERPSGFIQDLLEMHNKKSPMNHILASADSTPQLLGVE</sequence>
<feature type="chain" id="PRO_0000295156" description="Ras-responsive element-binding protein 1">
    <location>
        <begin position="1"/>
        <end position="1615"/>
    </location>
</feature>
<feature type="zinc finger region" description="C2H2-type 1" evidence="2">
    <location>
        <begin position="47"/>
        <end position="69"/>
    </location>
</feature>
<feature type="zinc finger region" description="C2H2-type 2" evidence="2">
    <location>
        <begin position="78"/>
        <end position="100"/>
    </location>
</feature>
<feature type="zinc finger region" description="C2H2-type 3" evidence="2">
    <location>
        <begin position="106"/>
        <end position="128"/>
    </location>
</feature>
<feature type="zinc finger region" description="C2H2-type 4" evidence="2">
    <location>
        <begin position="189"/>
        <end position="211"/>
    </location>
</feature>
<feature type="zinc finger region" description="C2H2-type 5" evidence="2">
    <location>
        <begin position="216"/>
        <end position="239"/>
    </location>
</feature>
<feature type="zinc finger region" description="C2H2-type 6" evidence="2">
    <location>
        <begin position="297"/>
        <end position="319"/>
    </location>
</feature>
<feature type="zinc finger region" description="C2H2-type 7" evidence="2">
    <location>
        <begin position="622"/>
        <end position="644"/>
    </location>
</feature>
<feature type="zinc finger region" description="C2H2-type 8" evidence="2">
    <location>
        <begin position="650"/>
        <end position="672"/>
    </location>
</feature>
<feature type="zinc finger region" description="C2H2-type 9" evidence="2">
    <location>
        <begin position="732"/>
        <end position="754"/>
    </location>
</feature>
<feature type="zinc finger region" description="C2H2-type 10" evidence="2">
    <location>
        <begin position="763"/>
        <end position="788"/>
    </location>
</feature>
<feature type="zinc finger region" description="C2H2-type 11" evidence="2">
    <location>
        <begin position="1170"/>
        <end position="1192"/>
    </location>
</feature>
<feature type="zinc finger region" description="C2H2-type 12" evidence="2">
    <location>
        <begin position="1298"/>
        <end position="1320"/>
    </location>
</feature>
<feature type="zinc finger region" description="C2H2-type 13" evidence="2">
    <location>
        <begin position="1419"/>
        <end position="1441"/>
    </location>
</feature>
<feature type="zinc finger region" description="C2H2-type 14" evidence="2">
    <location>
        <begin position="1447"/>
        <end position="1469"/>
    </location>
</feature>
<feature type="region of interest" description="Disordered" evidence="3">
    <location>
        <begin position="1"/>
        <end position="44"/>
    </location>
</feature>
<feature type="region of interest" description="Disordered" evidence="3">
    <location>
        <begin position="127"/>
        <end position="169"/>
    </location>
</feature>
<feature type="region of interest" description="Disordered" evidence="3">
    <location>
        <begin position="511"/>
        <end position="556"/>
    </location>
</feature>
<feature type="region of interest" description="Disordered" evidence="3">
    <location>
        <begin position="1025"/>
        <end position="1044"/>
    </location>
</feature>
<feature type="region of interest" description="Disordered" evidence="3">
    <location>
        <begin position="1058"/>
        <end position="1104"/>
    </location>
</feature>
<feature type="region of interest" description="Disordered" evidence="3">
    <location>
        <begin position="1123"/>
        <end position="1162"/>
    </location>
</feature>
<feature type="region of interest" description="Disordered" evidence="3">
    <location>
        <begin position="1214"/>
        <end position="1269"/>
    </location>
</feature>
<feature type="region of interest" description="Disordered" evidence="3">
    <location>
        <begin position="1313"/>
        <end position="1418"/>
    </location>
</feature>
<feature type="region of interest" description="Disordered" evidence="3">
    <location>
        <begin position="1464"/>
        <end position="1585"/>
    </location>
</feature>
<feature type="compositionally biased region" description="Polar residues" evidence="3">
    <location>
        <begin position="15"/>
        <end position="28"/>
    </location>
</feature>
<feature type="compositionally biased region" description="Basic residues" evidence="3">
    <location>
        <begin position="145"/>
        <end position="154"/>
    </location>
</feature>
<feature type="compositionally biased region" description="Polar residues" evidence="3">
    <location>
        <begin position="535"/>
        <end position="549"/>
    </location>
</feature>
<feature type="compositionally biased region" description="Low complexity" evidence="3">
    <location>
        <begin position="1026"/>
        <end position="1036"/>
    </location>
</feature>
<feature type="compositionally biased region" description="Basic residues" evidence="3">
    <location>
        <begin position="1082"/>
        <end position="1095"/>
    </location>
</feature>
<feature type="compositionally biased region" description="Polar residues" evidence="3">
    <location>
        <begin position="1123"/>
        <end position="1132"/>
    </location>
</feature>
<feature type="compositionally biased region" description="Acidic residues" evidence="3">
    <location>
        <begin position="1242"/>
        <end position="1262"/>
    </location>
</feature>
<feature type="compositionally biased region" description="Basic and acidic residues" evidence="3">
    <location>
        <begin position="1321"/>
        <end position="1339"/>
    </location>
</feature>
<feature type="compositionally biased region" description="Basic and acidic residues" evidence="3">
    <location>
        <begin position="1388"/>
        <end position="1414"/>
    </location>
</feature>
<feature type="compositionally biased region" description="Basic residues" evidence="3">
    <location>
        <begin position="1464"/>
        <end position="1477"/>
    </location>
</feature>
<feature type="compositionally biased region" description="Basic and acidic residues" evidence="3">
    <location>
        <begin position="1478"/>
        <end position="1493"/>
    </location>
</feature>
<feature type="compositionally biased region" description="Basic and acidic residues" evidence="3">
    <location>
        <begin position="1566"/>
        <end position="1580"/>
    </location>
</feature>
<feature type="sequence variant" description="In strain: Leghorn." evidence="4">
    <original>L</original>
    <variation>S</variation>
    <location>
        <position position="837"/>
    </location>
</feature>
<feature type="sequence variant" description="In strain: Leghorn." evidence="4">
    <original>W</original>
    <variation>C</variation>
    <location>
        <position position="932"/>
    </location>
</feature>
<reference key="1">
    <citation type="journal article" date="1997" name="Gene">
        <title>Analysis of the structure and expression of the chicken gene encoding a homolog of the human RREB-1 transcription factor.</title>
        <authorList>
            <person name="Miyake J.H."/>
            <person name="Szeto D.P."/>
            <person name="Stumph W.E."/>
        </authorList>
    </citation>
    <scope>NUCLEOTIDE SEQUENCE [MRNA]</scope>
    <scope>TISSUE SPECIFICITY</scope>
</reference>
<reference key="2">
    <citation type="journal article" date="2001" name="Poult. Sci.">
        <title>Genetic variation among chicken lines and mammalian species in specific genes.</title>
        <authorList>
            <person name="Zhou H."/>
            <person name="Liu W."/>
            <person name="Lamont S.J."/>
        </authorList>
    </citation>
    <scope>NUCLEOTIDE SEQUENCE [MRNA] OF 745-938</scope>
    <scope>VARIANTS SER-837 AND CYS-932</scope>
    <source>
        <strain>Fayoumi</strain>
        <strain>Leghorn</strain>
        <tissue>Spleen</tissue>
    </source>
</reference>
<dbReference type="EMBL" id="AF013754">
    <property type="protein sequence ID" value="AAB96584.1"/>
    <property type="molecule type" value="mRNA"/>
</dbReference>
<dbReference type="EMBL" id="AF221559">
    <property type="protein sequence ID" value="AAF71241.1"/>
    <property type="molecule type" value="mRNA"/>
</dbReference>
<dbReference type="EMBL" id="AF221560">
    <property type="protein sequence ID" value="AAF71242.1"/>
    <property type="molecule type" value="mRNA"/>
</dbReference>
<dbReference type="PIR" id="JC6510">
    <property type="entry name" value="JC6510"/>
</dbReference>
<dbReference type="RefSeq" id="NP_990380.1">
    <property type="nucleotide sequence ID" value="NM_205049.1"/>
</dbReference>
<dbReference type="SMR" id="O57415"/>
<dbReference type="FunCoup" id="O57415">
    <property type="interactions" value="505"/>
</dbReference>
<dbReference type="STRING" id="9031.ENSGALP00000070464"/>
<dbReference type="PaxDb" id="9031-ENSGALP00000036443"/>
<dbReference type="GeneID" id="395920"/>
<dbReference type="KEGG" id="gga:395920"/>
<dbReference type="CTD" id="6239"/>
<dbReference type="VEuPathDB" id="HostDB:geneid_395920"/>
<dbReference type="eggNOG" id="KOG1721">
    <property type="taxonomic scope" value="Eukaryota"/>
</dbReference>
<dbReference type="InParanoid" id="O57415"/>
<dbReference type="OrthoDB" id="3069995at2759"/>
<dbReference type="PhylomeDB" id="O57415"/>
<dbReference type="PRO" id="PR:O57415"/>
<dbReference type="Proteomes" id="UP000000539">
    <property type="component" value="Unassembled WGS sequence"/>
</dbReference>
<dbReference type="GO" id="GO:0005634">
    <property type="term" value="C:nucleus"/>
    <property type="evidence" value="ECO:0000318"/>
    <property type="project" value="GO_Central"/>
</dbReference>
<dbReference type="GO" id="GO:0001228">
    <property type="term" value="F:DNA-binding transcription activator activity, RNA polymerase II-specific"/>
    <property type="evidence" value="ECO:0000318"/>
    <property type="project" value="GO_Central"/>
</dbReference>
<dbReference type="GO" id="GO:0000978">
    <property type="term" value="F:RNA polymerase II cis-regulatory region sequence-specific DNA binding"/>
    <property type="evidence" value="ECO:0000318"/>
    <property type="project" value="GO_Central"/>
</dbReference>
<dbReference type="GO" id="GO:0008270">
    <property type="term" value="F:zinc ion binding"/>
    <property type="evidence" value="ECO:0007669"/>
    <property type="project" value="UniProtKB-KW"/>
</dbReference>
<dbReference type="GO" id="GO:0006357">
    <property type="term" value="P:regulation of transcription by RNA polymerase II"/>
    <property type="evidence" value="ECO:0000318"/>
    <property type="project" value="GO_Central"/>
</dbReference>
<dbReference type="FunFam" id="3.30.160.60:FF:001098">
    <property type="entry name" value="Ras responsive element binding protein 1"/>
    <property type="match status" value="1"/>
</dbReference>
<dbReference type="FunFam" id="3.30.160.60:FF:001835">
    <property type="entry name" value="Ras responsive element binding protein 1"/>
    <property type="match status" value="1"/>
</dbReference>
<dbReference type="FunFam" id="3.30.160.60:FF:002036">
    <property type="entry name" value="Ras-responsive element-binding protein 1"/>
    <property type="match status" value="1"/>
</dbReference>
<dbReference type="FunFam" id="3.30.160.60:FF:002611">
    <property type="entry name" value="Ras-responsive element-binding protein 1"/>
    <property type="match status" value="1"/>
</dbReference>
<dbReference type="FunFam" id="3.30.160.60:FF:001788">
    <property type="entry name" value="ras-responsive element-binding protein 1"/>
    <property type="match status" value="1"/>
</dbReference>
<dbReference type="FunFam" id="3.30.160.60:FF:000599">
    <property type="entry name" value="ras-responsive element-binding protein 1 isoform X1"/>
    <property type="match status" value="1"/>
</dbReference>
<dbReference type="FunFam" id="3.30.160.60:FF:000682">
    <property type="entry name" value="ras-responsive element-binding protein 1 isoform X1"/>
    <property type="match status" value="1"/>
</dbReference>
<dbReference type="FunFam" id="3.30.160.60:FF:002109">
    <property type="entry name" value="ras-responsive element-binding protein 1 isoform X1"/>
    <property type="match status" value="1"/>
</dbReference>
<dbReference type="FunFam" id="3.30.160.60:FF:002320">
    <property type="entry name" value="ras-responsive element-binding protein 1 isoform X1"/>
    <property type="match status" value="1"/>
</dbReference>
<dbReference type="FunFam" id="3.30.160.60:FF:000507">
    <property type="entry name" value="ras-responsive element-binding protein 1 isoform X2"/>
    <property type="match status" value="1"/>
</dbReference>
<dbReference type="FunFam" id="3.30.160.60:FF:003785">
    <property type="entry name" value="Ras-responsive element-binding protein 1b"/>
    <property type="match status" value="1"/>
</dbReference>
<dbReference type="Gene3D" id="3.30.160.60">
    <property type="entry name" value="Classic Zinc Finger"/>
    <property type="match status" value="10"/>
</dbReference>
<dbReference type="InterPro" id="IPR052795">
    <property type="entry name" value="RREB1"/>
</dbReference>
<dbReference type="InterPro" id="IPR036236">
    <property type="entry name" value="Znf_C2H2_sf"/>
</dbReference>
<dbReference type="InterPro" id="IPR013087">
    <property type="entry name" value="Znf_C2H2_type"/>
</dbReference>
<dbReference type="PANTHER" id="PTHR46451">
    <property type="entry name" value="RAS-RESPONSIVE ELEMENT-BINDING PROTEIN 1"/>
    <property type="match status" value="1"/>
</dbReference>
<dbReference type="PANTHER" id="PTHR46451:SF1">
    <property type="entry name" value="RAS-RESPONSIVE ELEMENT-BINDING PROTEIN 1"/>
    <property type="match status" value="1"/>
</dbReference>
<dbReference type="Pfam" id="PF00096">
    <property type="entry name" value="zf-C2H2"/>
    <property type="match status" value="7"/>
</dbReference>
<dbReference type="Pfam" id="PF13912">
    <property type="entry name" value="zf-C2H2_6"/>
    <property type="match status" value="3"/>
</dbReference>
<dbReference type="SMART" id="SM00355">
    <property type="entry name" value="ZnF_C2H2"/>
    <property type="match status" value="15"/>
</dbReference>
<dbReference type="SUPFAM" id="SSF57667">
    <property type="entry name" value="beta-beta-alpha zinc fingers"/>
    <property type="match status" value="7"/>
</dbReference>
<dbReference type="PROSITE" id="PS00028">
    <property type="entry name" value="ZINC_FINGER_C2H2_1"/>
    <property type="match status" value="13"/>
</dbReference>
<dbReference type="PROSITE" id="PS50157">
    <property type="entry name" value="ZINC_FINGER_C2H2_2"/>
    <property type="match status" value="13"/>
</dbReference>